<name>F180B_HUMAN</name>
<dbReference type="EMBL" id="AC104942">
    <property type="status" value="NOT_ANNOTATED_CDS"/>
    <property type="molecule type" value="Genomic_DNA"/>
</dbReference>
<dbReference type="EMBL" id="BC065704">
    <property type="protein sequence ID" value="AAH65704.1"/>
    <property type="status" value="ALT_INIT"/>
    <property type="molecule type" value="mRNA"/>
</dbReference>
<dbReference type="CCDS" id="CCDS91471.1"/>
<dbReference type="RefSeq" id="NP_001157851.1">
    <property type="nucleotide sequence ID" value="NM_001164379.3"/>
</dbReference>
<dbReference type="BioGRID" id="134442">
    <property type="interactions" value="2"/>
</dbReference>
<dbReference type="FunCoup" id="Q6P0A1">
    <property type="interactions" value="1"/>
</dbReference>
<dbReference type="IntAct" id="Q6P0A1">
    <property type="interactions" value="1"/>
</dbReference>
<dbReference type="STRING" id="9606.ENSP00000443133"/>
<dbReference type="iPTMnet" id="Q6P0A1"/>
<dbReference type="PhosphoSitePlus" id="Q6P0A1"/>
<dbReference type="BioMuta" id="FAM180B"/>
<dbReference type="MassIVE" id="Q6P0A1"/>
<dbReference type="PaxDb" id="9606-ENSP00000443133"/>
<dbReference type="PeptideAtlas" id="Q6P0A1"/>
<dbReference type="ProteomicsDB" id="66812"/>
<dbReference type="Antibodypedia" id="26836">
    <property type="antibodies" value="9 antibodies from 8 providers"/>
</dbReference>
<dbReference type="DNASU" id="399888"/>
<dbReference type="Ensembl" id="ENST00000538490.3">
    <property type="protein sequence ID" value="ENSP00000443133.2"/>
    <property type="gene ID" value="ENSG00000196666.6"/>
</dbReference>
<dbReference type="Ensembl" id="ENST00000644402.4">
    <property type="protein sequence ID" value="ENSP00000496127.2"/>
    <property type="gene ID" value="ENSG00000284938.4"/>
</dbReference>
<dbReference type="GeneID" id="399888"/>
<dbReference type="KEGG" id="hsa:399888"/>
<dbReference type="MANE-Select" id="ENST00000538490.3">
    <property type="protein sequence ID" value="ENSP00000443133.2"/>
    <property type="RefSeq nucleotide sequence ID" value="NM_001164379.3"/>
    <property type="RefSeq protein sequence ID" value="NP_001157851.1"/>
</dbReference>
<dbReference type="AGR" id="HGNC:34451"/>
<dbReference type="CTD" id="399888"/>
<dbReference type="GeneCards" id="FAM180B"/>
<dbReference type="HGNC" id="HGNC:34451">
    <property type="gene designation" value="FAM180B"/>
</dbReference>
<dbReference type="HPA" id="ENSG00000196666">
    <property type="expression patterns" value="Tissue enriched (choroid)"/>
</dbReference>
<dbReference type="neXtProt" id="NX_Q6P0A1"/>
<dbReference type="OpenTargets" id="ENSG00000196666"/>
<dbReference type="PharmGKB" id="PA162387572"/>
<dbReference type="VEuPathDB" id="HostDB:ENSG00000196666"/>
<dbReference type="eggNOG" id="ENOG502S953">
    <property type="taxonomic scope" value="Eukaryota"/>
</dbReference>
<dbReference type="GeneTree" id="ENSGT00940000154479"/>
<dbReference type="HOGENOM" id="CLU_113562_0_0_1"/>
<dbReference type="InParanoid" id="Q6P0A1"/>
<dbReference type="OMA" id="ELCKQFC"/>
<dbReference type="OrthoDB" id="8935082at2759"/>
<dbReference type="PAN-GO" id="Q6P0A1">
    <property type="GO annotations" value="0 GO annotations based on evolutionary models"/>
</dbReference>
<dbReference type="PhylomeDB" id="Q6P0A1"/>
<dbReference type="TreeFam" id="TF333387"/>
<dbReference type="PathwayCommons" id="Q6P0A1"/>
<dbReference type="SignaLink" id="Q6P0A1"/>
<dbReference type="BioGRID-ORCS" id="399888">
    <property type="hits" value="14 hits in 388 CRISPR screens"/>
</dbReference>
<dbReference type="GenomeRNAi" id="399888"/>
<dbReference type="Pharos" id="Q6P0A1">
    <property type="development level" value="Tdark"/>
</dbReference>
<dbReference type="PRO" id="PR:Q6P0A1"/>
<dbReference type="Proteomes" id="UP000005640">
    <property type="component" value="Chromosome 11"/>
</dbReference>
<dbReference type="RNAct" id="Q6P0A1">
    <property type="molecule type" value="protein"/>
</dbReference>
<dbReference type="Bgee" id="ENSG00000196666">
    <property type="expression patterns" value="Expressed in calcaneal tendon and 91 other cell types or tissues"/>
</dbReference>
<dbReference type="GO" id="GO:0005576">
    <property type="term" value="C:extracellular region"/>
    <property type="evidence" value="ECO:0007669"/>
    <property type="project" value="UniProtKB-SubCell"/>
</dbReference>
<dbReference type="InterPro" id="IPR029170">
    <property type="entry name" value="FAM180"/>
</dbReference>
<dbReference type="PANTHER" id="PTHR34034">
    <property type="entry name" value="PROTEIN FAM180A-RELATED"/>
    <property type="match status" value="1"/>
</dbReference>
<dbReference type="PANTHER" id="PTHR34034:SF1">
    <property type="entry name" value="PROTEIN FAM180B"/>
    <property type="match status" value="1"/>
</dbReference>
<dbReference type="Pfam" id="PF15173">
    <property type="entry name" value="FAM180"/>
    <property type="match status" value="1"/>
</dbReference>
<feature type="signal peptide" evidence="1">
    <location>
        <begin position="1"/>
        <end position="23"/>
    </location>
</feature>
<feature type="chain" id="PRO_0000349380" description="Protein FAM180B" evidence="1">
    <location>
        <begin position="24"/>
        <end position="183"/>
    </location>
</feature>
<feature type="sequence variant" id="VAR_046379" description="In dbSNP:rs4486587.">
    <original>A</original>
    <variation>T</variation>
    <location>
        <position position="145"/>
    </location>
</feature>
<sequence>MAATLQFLVCLVVAICLLSGVTTTQPHAGQPMDSTSVGGGLQEPEAPEVMFELLWAGLELDVMGQLHIQDEELASTHPGRRLRLLLQHHVPSDLEGTEQWLQQLQDLRKGPPLSTWDFEHLLLTGLSCVYRLHAASEAEERGRWAQVFALLAQETLWDLCKGFCPQDRPPSLGSWASILDPFP</sequence>
<organism>
    <name type="scientific">Homo sapiens</name>
    <name type="common">Human</name>
    <dbReference type="NCBI Taxonomy" id="9606"/>
    <lineage>
        <taxon>Eukaryota</taxon>
        <taxon>Metazoa</taxon>
        <taxon>Chordata</taxon>
        <taxon>Craniata</taxon>
        <taxon>Vertebrata</taxon>
        <taxon>Euteleostomi</taxon>
        <taxon>Mammalia</taxon>
        <taxon>Eutheria</taxon>
        <taxon>Euarchontoglires</taxon>
        <taxon>Primates</taxon>
        <taxon>Haplorrhini</taxon>
        <taxon>Catarrhini</taxon>
        <taxon>Hominidae</taxon>
        <taxon>Homo</taxon>
    </lineage>
</organism>
<proteinExistence type="evidence at protein level"/>
<gene>
    <name type="primary">FAM180B</name>
</gene>
<comment type="interaction">
    <interactant intactId="EBI-17856026">
        <id>Q6P0A1</id>
    </interactant>
    <interactant intactId="EBI-2339374">
        <id>Q8TAZ6</id>
        <label>CMTM2</label>
    </interactant>
    <organismsDiffer>false</organismsDiffer>
    <experiments>3</experiments>
</comment>
<comment type="subcellular location">
    <subcellularLocation>
        <location evidence="2">Secreted</location>
    </subcellularLocation>
</comment>
<comment type="similarity">
    <text evidence="2">Belongs to the FAM180 family.</text>
</comment>
<comment type="sequence caution" evidence="2">
    <conflict type="erroneous initiation">
        <sequence resource="EMBL-CDS" id="AAH65704"/>
    </conflict>
    <text>Extended N-terminus.</text>
</comment>
<evidence type="ECO:0000255" key="1"/>
<evidence type="ECO:0000305" key="2"/>
<evidence type="ECO:0000312" key="3">
    <source>
        <dbReference type="Proteomes" id="UP000005640"/>
    </source>
</evidence>
<protein>
    <recommendedName>
        <fullName>Protein FAM180B</fullName>
    </recommendedName>
</protein>
<keyword id="KW-1267">Proteomics identification</keyword>
<keyword id="KW-1185">Reference proteome</keyword>
<keyword id="KW-0964">Secreted</keyword>
<keyword id="KW-0732">Signal</keyword>
<accession>Q6P0A1</accession>
<accession>A0A0B4J243</accession>
<reference evidence="3" key="1">
    <citation type="journal article" date="2006" name="Nature">
        <title>Human chromosome 11 DNA sequence and analysis including novel gene identification.</title>
        <authorList>
            <person name="Taylor T.D."/>
            <person name="Noguchi H."/>
            <person name="Totoki Y."/>
            <person name="Toyoda A."/>
            <person name="Kuroki Y."/>
            <person name="Dewar K."/>
            <person name="Lloyd C."/>
            <person name="Itoh T."/>
            <person name="Takeda T."/>
            <person name="Kim D.-W."/>
            <person name="She X."/>
            <person name="Barlow K.F."/>
            <person name="Bloom T."/>
            <person name="Bruford E."/>
            <person name="Chang J.L."/>
            <person name="Cuomo C.A."/>
            <person name="Eichler E."/>
            <person name="FitzGerald M.G."/>
            <person name="Jaffe D.B."/>
            <person name="LaButti K."/>
            <person name="Nicol R."/>
            <person name="Park H.-S."/>
            <person name="Seaman C."/>
            <person name="Sougnez C."/>
            <person name="Yang X."/>
            <person name="Zimmer A.R."/>
            <person name="Zody M.C."/>
            <person name="Birren B.W."/>
            <person name="Nusbaum C."/>
            <person name="Fujiyama A."/>
            <person name="Hattori M."/>
            <person name="Rogers J."/>
            <person name="Lander E.S."/>
            <person name="Sakaki Y."/>
        </authorList>
    </citation>
    <scope>NUCLEOTIDE SEQUENCE [LARGE SCALE GENOMIC DNA]</scope>
</reference>
<reference key="2">
    <citation type="journal article" date="2004" name="Genome Res.">
        <title>The status, quality, and expansion of the NIH full-length cDNA project: the Mammalian Gene Collection (MGC).</title>
        <authorList>
            <consortium name="The MGC Project Team"/>
        </authorList>
    </citation>
    <scope>NUCLEOTIDE SEQUENCE [LARGE SCALE MRNA]</scope>
    <source>
        <tissue>PNS</tissue>
    </source>
</reference>